<evidence type="ECO:0000305" key="1"/>
<feature type="chain" id="PRO_0000097629" description="Cut9-interacting protein scn1">
    <location>
        <begin position="1"/>
        <end position="335"/>
    </location>
</feature>
<sequence>MESIIDAHCHPTDAPQELHLVANLSVGKLIVMGTRPTDQKYVEQLAKEYPGKVIPSFGIHPWFSYYLYDDLDKDLQSSETRKKKHYEKILTPIPDEDFINALPNPVPISEFLEDARRHLKQYPNALIGEIGLDKPFRLPVGPYDARSSLPQGPLSPFYVKMEHQCKVFEAQVRLAAEFQRAVSVHCVQTYALLYSSLAKFWDGRWIPSKTKIRKMKKEEYENSLAEERKHYPPKICLHSYSGSIEQISQFSAHKVPTEFYYSFSIGINSRYKNFIQTLKGVPDDKLLAESDHHSASQIDELVRQSLNVMSEAKSWTFEDTITKISSNSKAFLKVT</sequence>
<dbReference type="EMBL" id="D31845">
    <property type="protein sequence ID" value="BAA06631.1"/>
    <property type="status" value="ALT_INIT"/>
    <property type="molecule type" value="Genomic_DNA"/>
</dbReference>
<dbReference type="EMBL" id="CU329670">
    <property type="protein sequence ID" value="CAB90779.1"/>
    <property type="molecule type" value="Genomic_DNA"/>
</dbReference>
<dbReference type="PIR" id="B55164">
    <property type="entry name" value="B55164"/>
</dbReference>
<dbReference type="RefSeq" id="NP_594071.1">
    <property type="nucleotide sequence ID" value="NM_001019495.2"/>
</dbReference>
<dbReference type="SMR" id="P41890"/>
<dbReference type="BioGRID" id="279770">
    <property type="interactions" value="4"/>
</dbReference>
<dbReference type="FunCoup" id="P41890">
    <property type="interactions" value="15"/>
</dbReference>
<dbReference type="STRING" id="284812.P41890"/>
<dbReference type="PaxDb" id="4896-SPAC688.13.1"/>
<dbReference type="EnsemblFungi" id="SPAC688.13.1">
    <property type="protein sequence ID" value="SPAC688.13.1:pep"/>
    <property type="gene ID" value="SPAC688.13"/>
</dbReference>
<dbReference type="GeneID" id="2543348"/>
<dbReference type="KEGG" id="spo:2543348"/>
<dbReference type="PomBase" id="SPAC688.13"/>
<dbReference type="VEuPathDB" id="FungiDB:SPAC688.13"/>
<dbReference type="eggNOG" id="KOG3020">
    <property type="taxonomic scope" value="Eukaryota"/>
</dbReference>
<dbReference type="HOGENOM" id="CLU_031506_3_1_1"/>
<dbReference type="InParanoid" id="P41890"/>
<dbReference type="OMA" id="VPCFGWH"/>
<dbReference type="PhylomeDB" id="P41890"/>
<dbReference type="PRO" id="PR:P41890"/>
<dbReference type="Proteomes" id="UP000002485">
    <property type="component" value="Chromosome I"/>
</dbReference>
<dbReference type="GO" id="GO:0005829">
    <property type="term" value="C:cytosol"/>
    <property type="evidence" value="ECO:0007005"/>
    <property type="project" value="PomBase"/>
</dbReference>
<dbReference type="GO" id="GO:0005634">
    <property type="term" value="C:nucleus"/>
    <property type="evidence" value="ECO:0007005"/>
    <property type="project" value="PomBase"/>
</dbReference>
<dbReference type="GO" id="GO:0016788">
    <property type="term" value="F:hydrolase activity, acting on ester bonds"/>
    <property type="evidence" value="ECO:0007669"/>
    <property type="project" value="InterPro"/>
</dbReference>
<dbReference type="Gene3D" id="3.20.20.140">
    <property type="entry name" value="Metal-dependent hydrolases"/>
    <property type="match status" value="1"/>
</dbReference>
<dbReference type="InterPro" id="IPR032466">
    <property type="entry name" value="Metal_Hydrolase"/>
</dbReference>
<dbReference type="InterPro" id="IPR053044">
    <property type="entry name" value="Metallo-hydrolase/TatD-type"/>
</dbReference>
<dbReference type="InterPro" id="IPR001130">
    <property type="entry name" value="TatD-like"/>
</dbReference>
<dbReference type="PANTHER" id="PTHR47345">
    <property type="entry name" value="CUT9-INTERACTING PROTEIN SCN1"/>
    <property type="match status" value="1"/>
</dbReference>
<dbReference type="PANTHER" id="PTHR47345:SF1">
    <property type="entry name" value="CUT9-INTERACTING PROTEIN SCN1"/>
    <property type="match status" value="1"/>
</dbReference>
<dbReference type="Pfam" id="PF01026">
    <property type="entry name" value="TatD_DNase"/>
    <property type="match status" value="1"/>
</dbReference>
<dbReference type="PIRSF" id="PIRSF005902">
    <property type="entry name" value="DNase_TatD"/>
    <property type="match status" value="1"/>
</dbReference>
<dbReference type="SUPFAM" id="SSF51556">
    <property type="entry name" value="Metallo-dependent hydrolases"/>
    <property type="match status" value="1"/>
</dbReference>
<accession>P41890</accession>
<accession>Q9P6L3</accession>
<proteinExistence type="inferred from homology"/>
<gene>
    <name type="primary">scn1</name>
    <name type="ORF">SPAC688.13</name>
</gene>
<comment type="function">
    <text>Interacts with cut9.</text>
</comment>
<comment type="similarity">
    <text evidence="1">Belongs to the metallo-dependent hydrolases superfamily.</text>
</comment>
<comment type="sequence caution" evidence="1">
    <conflict type="erroneous initiation">
        <sequence resource="EMBL-CDS" id="BAA06631"/>
    </conflict>
</comment>
<protein>
    <recommendedName>
        <fullName>Cut9-interacting protein scn1</fullName>
    </recommendedName>
</protein>
<name>SCN1_SCHPO</name>
<reference key="1">
    <citation type="journal article" date="1994" name="J. Cell Biol.">
        <title>Bypassing anaphase by fission yeast cut9 mutation: requirement of cut9+ to initiate anaphase.</title>
        <authorList>
            <person name="Samejima I."/>
            <person name="Yanagida M."/>
        </authorList>
    </citation>
    <scope>NUCLEOTIDE SEQUENCE [GENOMIC DNA]</scope>
</reference>
<reference key="2">
    <citation type="journal article" date="2002" name="Nature">
        <title>The genome sequence of Schizosaccharomyces pombe.</title>
        <authorList>
            <person name="Wood V."/>
            <person name="Gwilliam R."/>
            <person name="Rajandream M.A."/>
            <person name="Lyne M.H."/>
            <person name="Lyne R."/>
            <person name="Stewart A."/>
            <person name="Sgouros J.G."/>
            <person name="Peat N."/>
            <person name="Hayles J."/>
            <person name="Baker S.G."/>
            <person name="Basham D."/>
            <person name="Bowman S."/>
            <person name="Brooks K."/>
            <person name="Brown D."/>
            <person name="Brown S."/>
            <person name="Chillingworth T."/>
            <person name="Churcher C.M."/>
            <person name="Collins M."/>
            <person name="Connor R."/>
            <person name="Cronin A."/>
            <person name="Davis P."/>
            <person name="Feltwell T."/>
            <person name="Fraser A."/>
            <person name="Gentles S."/>
            <person name="Goble A."/>
            <person name="Hamlin N."/>
            <person name="Harris D.E."/>
            <person name="Hidalgo J."/>
            <person name="Hodgson G."/>
            <person name="Holroyd S."/>
            <person name="Hornsby T."/>
            <person name="Howarth S."/>
            <person name="Huckle E.J."/>
            <person name="Hunt S."/>
            <person name="Jagels K."/>
            <person name="James K.D."/>
            <person name="Jones L."/>
            <person name="Jones M."/>
            <person name="Leather S."/>
            <person name="McDonald S."/>
            <person name="McLean J."/>
            <person name="Mooney P."/>
            <person name="Moule S."/>
            <person name="Mungall K.L."/>
            <person name="Murphy L.D."/>
            <person name="Niblett D."/>
            <person name="Odell C."/>
            <person name="Oliver K."/>
            <person name="O'Neil S."/>
            <person name="Pearson D."/>
            <person name="Quail M.A."/>
            <person name="Rabbinowitsch E."/>
            <person name="Rutherford K.M."/>
            <person name="Rutter S."/>
            <person name="Saunders D."/>
            <person name="Seeger K."/>
            <person name="Sharp S."/>
            <person name="Skelton J."/>
            <person name="Simmonds M.N."/>
            <person name="Squares R."/>
            <person name="Squares S."/>
            <person name="Stevens K."/>
            <person name="Taylor K."/>
            <person name="Taylor R.G."/>
            <person name="Tivey A."/>
            <person name="Walsh S.V."/>
            <person name="Warren T."/>
            <person name="Whitehead S."/>
            <person name="Woodward J.R."/>
            <person name="Volckaert G."/>
            <person name="Aert R."/>
            <person name="Robben J."/>
            <person name="Grymonprez B."/>
            <person name="Weltjens I."/>
            <person name="Vanstreels E."/>
            <person name="Rieger M."/>
            <person name="Schaefer M."/>
            <person name="Mueller-Auer S."/>
            <person name="Gabel C."/>
            <person name="Fuchs M."/>
            <person name="Duesterhoeft A."/>
            <person name="Fritzc C."/>
            <person name="Holzer E."/>
            <person name="Moestl D."/>
            <person name="Hilbert H."/>
            <person name="Borzym K."/>
            <person name="Langer I."/>
            <person name="Beck A."/>
            <person name="Lehrach H."/>
            <person name="Reinhardt R."/>
            <person name="Pohl T.M."/>
            <person name="Eger P."/>
            <person name="Zimmermann W."/>
            <person name="Wedler H."/>
            <person name="Wambutt R."/>
            <person name="Purnelle B."/>
            <person name="Goffeau A."/>
            <person name="Cadieu E."/>
            <person name="Dreano S."/>
            <person name="Gloux S."/>
            <person name="Lelaure V."/>
            <person name="Mottier S."/>
            <person name="Galibert F."/>
            <person name="Aves S.J."/>
            <person name="Xiang Z."/>
            <person name="Hunt C."/>
            <person name="Moore K."/>
            <person name="Hurst S.M."/>
            <person name="Lucas M."/>
            <person name="Rochet M."/>
            <person name="Gaillardin C."/>
            <person name="Tallada V.A."/>
            <person name="Garzon A."/>
            <person name="Thode G."/>
            <person name="Daga R.R."/>
            <person name="Cruzado L."/>
            <person name="Jimenez J."/>
            <person name="Sanchez M."/>
            <person name="del Rey F."/>
            <person name="Benito J."/>
            <person name="Dominguez A."/>
            <person name="Revuelta J.L."/>
            <person name="Moreno S."/>
            <person name="Armstrong J."/>
            <person name="Forsburg S.L."/>
            <person name="Cerutti L."/>
            <person name="Lowe T."/>
            <person name="McCombie W.R."/>
            <person name="Paulsen I."/>
            <person name="Potashkin J."/>
            <person name="Shpakovski G.V."/>
            <person name="Ussery D."/>
            <person name="Barrell B.G."/>
            <person name="Nurse P."/>
        </authorList>
    </citation>
    <scope>NUCLEOTIDE SEQUENCE [LARGE SCALE GENOMIC DNA]</scope>
    <source>
        <strain>972 / ATCC 24843</strain>
    </source>
</reference>
<keyword id="KW-1185">Reference proteome</keyword>
<organism>
    <name type="scientific">Schizosaccharomyces pombe (strain 972 / ATCC 24843)</name>
    <name type="common">Fission yeast</name>
    <dbReference type="NCBI Taxonomy" id="284812"/>
    <lineage>
        <taxon>Eukaryota</taxon>
        <taxon>Fungi</taxon>
        <taxon>Dikarya</taxon>
        <taxon>Ascomycota</taxon>
        <taxon>Taphrinomycotina</taxon>
        <taxon>Schizosaccharomycetes</taxon>
        <taxon>Schizosaccharomycetales</taxon>
        <taxon>Schizosaccharomycetaceae</taxon>
        <taxon>Schizosaccharomyces</taxon>
    </lineage>
</organism>